<dbReference type="EC" id="6.3.3.1" evidence="1"/>
<dbReference type="EMBL" id="BX571965">
    <property type="protein sequence ID" value="CAH36828.1"/>
    <property type="molecule type" value="Genomic_DNA"/>
</dbReference>
<dbReference type="RefSeq" id="WP_004527676.1">
    <property type="nucleotide sequence ID" value="NZ_CP009538.1"/>
</dbReference>
<dbReference type="RefSeq" id="YP_109413.1">
    <property type="nucleotide sequence ID" value="NC_006350.1"/>
</dbReference>
<dbReference type="SMR" id="Q63R55"/>
<dbReference type="STRING" id="272560.BPSL2818"/>
<dbReference type="KEGG" id="bps:BPSL2818"/>
<dbReference type="PATRIC" id="fig|272560.51.peg.2487"/>
<dbReference type="eggNOG" id="COG0150">
    <property type="taxonomic scope" value="Bacteria"/>
</dbReference>
<dbReference type="UniPathway" id="UPA00074">
    <property type="reaction ID" value="UER00129"/>
</dbReference>
<dbReference type="Proteomes" id="UP000000605">
    <property type="component" value="Chromosome 1"/>
</dbReference>
<dbReference type="GO" id="GO:0005829">
    <property type="term" value="C:cytosol"/>
    <property type="evidence" value="ECO:0007669"/>
    <property type="project" value="TreeGrafter"/>
</dbReference>
<dbReference type="GO" id="GO:0005524">
    <property type="term" value="F:ATP binding"/>
    <property type="evidence" value="ECO:0007669"/>
    <property type="project" value="UniProtKB-KW"/>
</dbReference>
<dbReference type="GO" id="GO:0004637">
    <property type="term" value="F:phosphoribosylamine-glycine ligase activity"/>
    <property type="evidence" value="ECO:0007669"/>
    <property type="project" value="TreeGrafter"/>
</dbReference>
<dbReference type="GO" id="GO:0004641">
    <property type="term" value="F:phosphoribosylformylglycinamidine cyclo-ligase activity"/>
    <property type="evidence" value="ECO:0007669"/>
    <property type="project" value="UniProtKB-UniRule"/>
</dbReference>
<dbReference type="GO" id="GO:0006189">
    <property type="term" value="P:'de novo' IMP biosynthetic process"/>
    <property type="evidence" value="ECO:0007669"/>
    <property type="project" value="UniProtKB-UniRule"/>
</dbReference>
<dbReference type="GO" id="GO:0046084">
    <property type="term" value="P:adenine biosynthetic process"/>
    <property type="evidence" value="ECO:0007669"/>
    <property type="project" value="TreeGrafter"/>
</dbReference>
<dbReference type="CDD" id="cd02196">
    <property type="entry name" value="PurM"/>
    <property type="match status" value="1"/>
</dbReference>
<dbReference type="FunFam" id="3.30.1330.10:FF:000001">
    <property type="entry name" value="Phosphoribosylformylglycinamidine cyclo-ligase"/>
    <property type="match status" value="1"/>
</dbReference>
<dbReference type="FunFam" id="3.90.650.10:FF:000001">
    <property type="entry name" value="Phosphoribosylformylglycinamidine cyclo-ligase"/>
    <property type="match status" value="1"/>
</dbReference>
<dbReference type="Gene3D" id="3.90.650.10">
    <property type="entry name" value="PurM-like C-terminal domain"/>
    <property type="match status" value="1"/>
</dbReference>
<dbReference type="Gene3D" id="3.30.1330.10">
    <property type="entry name" value="PurM-like, N-terminal domain"/>
    <property type="match status" value="1"/>
</dbReference>
<dbReference type="HAMAP" id="MF_00741">
    <property type="entry name" value="AIRS"/>
    <property type="match status" value="1"/>
</dbReference>
<dbReference type="InterPro" id="IPR010918">
    <property type="entry name" value="PurM-like_C_dom"/>
</dbReference>
<dbReference type="InterPro" id="IPR036676">
    <property type="entry name" value="PurM-like_C_sf"/>
</dbReference>
<dbReference type="InterPro" id="IPR016188">
    <property type="entry name" value="PurM-like_N"/>
</dbReference>
<dbReference type="InterPro" id="IPR036921">
    <property type="entry name" value="PurM-like_N_sf"/>
</dbReference>
<dbReference type="InterPro" id="IPR004733">
    <property type="entry name" value="PurM_cligase"/>
</dbReference>
<dbReference type="NCBIfam" id="TIGR00878">
    <property type="entry name" value="purM"/>
    <property type="match status" value="1"/>
</dbReference>
<dbReference type="PANTHER" id="PTHR10520:SF12">
    <property type="entry name" value="TRIFUNCTIONAL PURINE BIOSYNTHETIC PROTEIN ADENOSINE-3"/>
    <property type="match status" value="1"/>
</dbReference>
<dbReference type="PANTHER" id="PTHR10520">
    <property type="entry name" value="TRIFUNCTIONAL PURINE BIOSYNTHETIC PROTEIN ADENOSINE-3-RELATED"/>
    <property type="match status" value="1"/>
</dbReference>
<dbReference type="Pfam" id="PF00586">
    <property type="entry name" value="AIRS"/>
    <property type="match status" value="1"/>
</dbReference>
<dbReference type="Pfam" id="PF02769">
    <property type="entry name" value="AIRS_C"/>
    <property type="match status" value="1"/>
</dbReference>
<dbReference type="SUPFAM" id="SSF56042">
    <property type="entry name" value="PurM C-terminal domain-like"/>
    <property type="match status" value="1"/>
</dbReference>
<dbReference type="SUPFAM" id="SSF55326">
    <property type="entry name" value="PurM N-terminal domain-like"/>
    <property type="match status" value="1"/>
</dbReference>
<reference key="1">
    <citation type="journal article" date="2004" name="Proc. Natl. Acad. Sci. U.S.A.">
        <title>Genomic plasticity of the causative agent of melioidosis, Burkholderia pseudomallei.</title>
        <authorList>
            <person name="Holden M.T.G."/>
            <person name="Titball R.W."/>
            <person name="Peacock S.J."/>
            <person name="Cerdeno-Tarraga A.-M."/>
            <person name="Atkins T."/>
            <person name="Crossman L.C."/>
            <person name="Pitt T."/>
            <person name="Churcher C."/>
            <person name="Mungall K.L."/>
            <person name="Bentley S.D."/>
            <person name="Sebaihia M."/>
            <person name="Thomson N.R."/>
            <person name="Bason N."/>
            <person name="Beacham I.R."/>
            <person name="Brooks K."/>
            <person name="Brown K.A."/>
            <person name="Brown N.F."/>
            <person name="Challis G.L."/>
            <person name="Cherevach I."/>
            <person name="Chillingworth T."/>
            <person name="Cronin A."/>
            <person name="Crossett B."/>
            <person name="Davis P."/>
            <person name="DeShazer D."/>
            <person name="Feltwell T."/>
            <person name="Fraser A."/>
            <person name="Hance Z."/>
            <person name="Hauser H."/>
            <person name="Holroyd S."/>
            <person name="Jagels K."/>
            <person name="Keith K.E."/>
            <person name="Maddison M."/>
            <person name="Moule S."/>
            <person name="Price C."/>
            <person name="Quail M.A."/>
            <person name="Rabbinowitsch E."/>
            <person name="Rutherford K."/>
            <person name="Sanders M."/>
            <person name="Simmonds M."/>
            <person name="Songsivilai S."/>
            <person name="Stevens K."/>
            <person name="Tumapa S."/>
            <person name="Vesaratchavest M."/>
            <person name="Whitehead S."/>
            <person name="Yeats C."/>
            <person name="Barrell B.G."/>
            <person name="Oyston P.C.F."/>
            <person name="Parkhill J."/>
        </authorList>
    </citation>
    <scope>NUCLEOTIDE SEQUENCE [LARGE SCALE GENOMIC DNA]</scope>
    <source>
        <strain>K96243</strain>
    </source>
</reference>
<evidence type="ECO:0000255" key="1">
    <source>
        <dbReference type="HAMAP-Rule" id="MF_00741"/>
    </source>
</evidence>
<sequence length="351" mass="36941">MNPPKSAPDAQGLSYRDAGVDIDAGDALVDKIKPFAKKTLRDGVLGGIGGFGALFEVPKKYREPVLVSGTDGVGTKLKLAFHLNKHDTVGQDLVAMSVNDILVQGAEPLFFLDYFACGKLDVETAATVVKGIATGCELAGCALIGGETAEMPGMYPDGEYDLAGFAVGAVEKSKIIDGSTIAEGDVVLGLASSGIHSNGFSLVRKIIERANPDLSADFHGRSLADALMAPTRIYVKPLLALMEKIAVKGMAHITGGGLVENIPRVLRDGLTAELDQHAWPLPPLFQWLRQHGGVADAEMHRVFNCGIGMAVIVSAADADDALRQLADAGEQVWKIGTVRASREGEAQTVVV</sequence>
<name>PUR5_BURPS</name>
<feature type="chain" id="PRO_0000258340" description="Phosphoribosylformylglycinamidine cyclo-ligase">
    <location>
        <begin position="1"/>
        <end position="351"/>
    </location>
</feature>
<keyword id="KW-0067">ATP-binding</keyword>
<keyword id="KW-0963">Cytoplasm</keyword>
<keyword id="KW-0436">Ligase</keyword>
<keyword id="KW-0547">Nucleotide-binding</keyword>
<keyword id="KW-0658">Purine biosynthesis</keyword>
<keyword id="KW-1185">Reference proteome</keyword>
<protein>
    <recommendedName>
        <fullName evidence="1">Phosphoribosylformylglycinamidine cyclo-ligase</fullName>
        <ecNumber evidence="1">6.3.3.1</ecNumber>
    </recommendedName>
    <alternativeName>
        <fullName evidence="1">AIR synthase</fullName>
    </alternativeName>
    <alternativeName>
        <fullName evidence="1">AIRS</fullName>
    </alternativeName>
    <alternativeName>
        <fullName evidence="1">Phosphoribosyl-aminoimidazole synthetase</fullName>
    </alternativeName>
</protein>
<proteinExistence type="inferred from homology"/>
<gene>
    <name evidence="1" type="primary">purM</name>
    <name type="ordered locus">BPSL2818</name>
</gene>
<organism>
    <name type="scientific">Burkholderia pseudomallei (strain K96243)</name>
    <dbReference type="NCBI Taxonomy" id="272560"/>
    <lineage>
        <taxon>Bacteria</taxon>
        <taxon>Pseudomonadati</taxon>
        <taxon>Pseudomonadota</taxon>
        <taxon>Betaproteobacteria</taxon>
        <taxon>Burkholderiales</taxon>
        <taxon>Burkholderiaceae</taxon>
        <taxon>Burkholderia</taxon>
        <taxon>pseudomallei group</taxon>
    </lineage>
</organism>
<comment type="catalytic activity">
    <reaction evidence="1">
        <text>2-formamido-N(1)-(5-O-phospho-beta-D-ribosyl)acetamidine + ATP = 5-amino-1-(5-phospho-beta-D-ribosyl)imidazole + ADP + phosphate + H(+)</text>
        <dbReference type="Rhea" id="RHEA:23032"/>
        <dbReference type="ChEBI" id="CHEBI:15378"/>
        <dbReference type="ChEBI" id="CHEBI:30616"/>
        <dbReference type="ChEBI" id="CHEBI:43474"/>
        <dbReference type="ChEBI" id="CHEBI:137981"/>
        <dbReference type="ChEBI" id="CHEBI:147287"/>
        <dbReference type="ChEBI" id="CHEBI:456216"/>
        <dbReference type="EC" id="6.3.3.1"/>
    </reaction>
</comment>
<comment type="pathway">
    <text evidence="1">Purine metabolism; IMP biosynthesis via de novo pathway; 5-amino-1-(5-phospho-D-ribosyl)imidazole from N(2)-formyl-N(1)-(5-phospho-D-ribosyl)glycinamide: step 2/2.</text>
</comment>
<comment type="subcellular location">
    <subcellularLocation>
        <location evidence="1">Cytoplasm</location>
    </subcellularLocation>
</comment>
<comment type="similarity">
    <text evidence="1">Belongs to the AIR synthase family.</text>
</comment>
<accession>Q63R55</accession>